<reference key="1">
    <citation type="journal article" date="2003" name="Science">
        <title>Role of mobile DNA in the evolution of vancomycin-resistant Enterococcus faecalis.</title>
        <authorList>
            <person name="Paulsen I.T."/>
            <person name="Banerjei L."/>
            <person name="Myers G.S.A."/>
            <person name="Nelson K.E."/>
            <person name="Seshadri R."/>
            <person name="Read T.D."/>
            <person name="Fouts D.E."/>
            <person name="Eisen J.A."/>
            <person name="Gill S.R."/>
            <person name="Heidelberg J.F."/>
            <person name="Tettelin H."/>
            <person name="Dodson R.J."/>
            <person name="Umayam L.A."/>
            <person name="Brinkac L.M."/>
            <person name="Beanan M.J."/>
            <person name="Daugherty S.C."/>
            <person name="DeBoy R.T."/>
            <person name="Durkin S.A."/>
            <person name="Kolonay J.F."/>
            <person name="Madupu R."/>
            <person name="Nelson W.C."/>
            <person name="Vamathevan J.J."/>
            <person name="Tran B."/>
            <person name="Upton J."/>
            <person name="Hansen T."/>
            <person name="Shetty J."/>
            <person name="Khouri H.M."/>
            <person name="Utterback T.R."/>
            <person name="Radune D."/>
            <person name="Ketchum K.A."/>
            <person name="Dougherty B.A."/>
            <person name="Fraser C.M."/>
        </authorList>
    </citation>
    <scope>NUCLEOTIDE SEQUENCE [LARGE SCALE GENOMIC DNA]</scope>
    <source>
        <strain>ATCC 700802 / V583</strain>
    </source>
</reference>
<comment type="function">
    <text evidence="1">Peptide chain release factor 1 directs the termination of translation in response to the peptide chain termination codons UAG and UAA.</text>
</comment>
<comment type="subcellular location">
    <subcellularLocation>
        <location evidence="1">Cytoplasm</location>
    </subcellularLocation>
</comment>
<comment type="PTM">
    <text evidence="1">Methylated by PrmC. Methylation increases the termination efficiency of RF1.</text>
</comment>
<comment type="similarity">
    <text evidence="1">Belongs to the prokaryotic/mitochondrial release factor family.</text>
</comment>
<proteinExistence type="inferred from homology"/>
<name>RF1_ENTFA</name>
<accession>Q831F6</accession>
<dbReference type="EMBL" id="AE016830">
    <property type="protein sequence ID" value="AAO82266.1"/>
    <property type="molecule type" value="Genomic_DNA"/>
</dbReference>
<dbReference type="RefSeq" id="NP_816196.1">
    <property type="nucleotide sequence ID" value="NC_004668.1"/>
</dbReference>
<dbReference type="RefSeq" id="WP_002356619.1">
    <property type="nucleotide sequence ID" value="NZ_KE136528.1"/>
</dbReference>
<dbReference type="SMR" id="Q831F6"/>
<dbReference type="STRING" id="226185.EF_2554"/>
<dbReference type="DNASU" id="1201416"/>
<dbReference type="EnsemblBacteria" id="AAO82266">
    <property type="protein sequence ID" value="AAO82266"/>
    <property type="gene ID" value="EF_2554"/>
</dbReference>
<dbReference type="GeneID" id="60894561"/>
<dbReference type="KEGG" id="efa:EF2554"/>
<dbReference type="PATRIC" id="fig|226185.45.peg.997"/>
<dbReference type="eggNOG" id="COG0216">
    <property type="taxonomic scope" value="Bacteria"/>
</dbReference>
<dbReference type="HOGENOM" id="CLU_036856_0_1_9"/>
<dbReference type="Proteomes" id="UP000001415">
    <property type="component" value="Chromosome"/>
</dbReference>
<dbReference type="GO" id="GO:0005737">
    <property type="term" value="C:cytoplasm"/>
    <property type="evidence" value="ECO:0007669"/>
    <property type="project" value="UniProtKB-SubCell"/>
</dbReference>
<dbReference type="GO" id="GO:0016149">
    <property type="term" value="F:translation release factor activity, codon specific"/>
    <property type="evidence" value="ECO:0007669"/>
    <property type="project" value="UniProtKB-UniRule"/>
</dbReference>
<dbReference type="FunFam" id="3.30.160.20:FF:000004">
    <property type="entry name" value="Peptide chain release factor 1"/>
    <property type="match status" value="1"/>
</dbReference>
<dbReference type="FunFam" id="3.30.70.1660:FF:000002">
    <property type="entry name" value="Peptide chain release factor 1"/>
    <property type="match status" value="1"/>
</dbReference>
<dbReference type="FunFam" id="3.30.70.1660:FF:000004">
    <property type="entry name" value="Peptide chain release factor 1"/>
    <property type="match status" value="1"/>
</dbReference>
<dbReference type="Gene3D" id="3.30.160.20">
    <property type="match status" value="1"/>
</dbReference>
<dbReference type="Gene3D" id="3.30.70.1660">
    <property type="match status" value="1"/>
</dbReference>
<dbReference type="Gene3D" id="6.10.140.1950">
    <property type="match status" value="1"/>
</dbReference>
<dbReference type="HAMAP" id="MF_00093">
    <property type="entry name" value="Rel_fac_1"/>
    <property type="match status" value="1"/>
</dbReference>
<dbReference type="InterPro" id="IPR005139">
    <property type="entry name" value="PCRF"/>
</dbReference>
<dbReference type="InterPro" id="IPR000352">
    <property type="entry name" value="Pep_chain_release_fac_I"/>
</dbReference>
<dbReference type="InterPro" id="IPR045853">
    <property type="entry name" value="Pep_chain_release_fac_I_sf"/>
</dbReference>
<dbReference type="InterPro" id="IPR050057">
    <property type="entry name" value="Prokaryotic/Mito_RF"/>
</dbReference>
<dbReference type="InterPro" id="IPR004373">
    <property type="entry name" value="RF-1"/>
</dbReference>
<dbReference type="NCBIfam" id="TIGR00019">
    <property type="entry name" value="prfA"/>
    <property type="match status" value="1"/>
</dbReference>
<dbReference type="NCBIfam" id="NF001859">
    <property type="entry name" value="PRK00591.1"/>
    <property type="match status" value="1"/>
</dbReference>
<dbReference type="PANTHER" id="PTHR43804">
    <property type="entry name" value="LD18447P"/>
    <property type="match status" value="1"/>
</dbReference>
<dbReference type="PANTHER" id="PTHR43804:SF7">
    <property type="entry name" value="LD18447P"/>
    <property type="match status" value="1"/>
</dbReference>
<dbReference type="Pfam" id="PF03462">
    <property type="entry name" value="PCRF"/>
    <property type="match status" value="1"/>
</dbReference>
<dbReference type="Pfam" id="PF00472">
    <property type="entry name" value="RF-1"/>
    <property type="match status" value="1"/>
</dbReference>
<dbReference type="SMART" id="SM00937">
    <property type="entry name" value="PCRF"/>
    <property type="match status" value="1"/>
</dbReference>
<dbReference type="SUPFAM" id="SSF75620">
    <property type="entry name" value="Release factor"/>
    <property type="match status" value="1"/>
</dbReference>
<dbReference type="PROSITE" id="PS00745">
    <property type="entry name" value="RF_PROK_I"/>
    <property type="match status" value="1"/>
</dbReference>
<protein>
    <recommendedName>
        <fullName evidence="1">Peptide chain release factor 1</fullName>
        <shortName evidence="1">RF-1</shortName>
    </recommendedName>
</protein>
<sequence>MYDQLQSIEDRYEELGELLSDPAVISDTKRFMELSKEEANTRETVEVYRRYKQVVEGISDAEELLSENLDAEMAEMAKEELSDLKKEKEVLEDRIKILLLPKDPNDDKNIIMEIRGAAGGDEAALFAGDLFNMYQKYAEAQGWKAEVLEANVTGIGGYKEVIMMISGDNVFSKLKYESGAHRVQRVPSTESQGRIHTSTATVVVMPEAEEVEIELADKDIRVDIYHASGAGGQHVNKTASAVRLTHLPTGIVVAMQDERSQLKNREKAMKVLRARVYDQIQQEAQSEYDANRKSAVGTGDRSERIRTYNFPQNRVTDHRIGLTIQKLDQILAGKLDEIIDALVLYDQTSKLEEMQNG</sequence>
<organism>
    <name type="scientific">Enterococcus faecalis (strain ATCC 700802 / V583)</name>
    <dbReference type="NCBI Taxonomy" id="226185"/>
    <lineage>
        <taxon>Bacteria</taxon>
        <taxon>Bacillati</taxon>
        <taxon>Bacillota</taxon>
        <taxon>Bacilli</taxon>
        <taxon>Lactobacillales</taxon>
        <taxon>Enterococcaceae</taxon>
        <taxon>Enterococcus</taxon>
    </lineage>
</organism>
<keyword id="KW-0963">Cytoplasm</keyword>
<keyword id="KW-0488">Methylation</keyword>
<keyword id="KW-0648">Protein biosynthesis</keyword>
<keyword id="KW-1185">Reference proteome</keyword>
<feature type="chain" id="PRO_0000177671" description="Peptide chain release factor 1">
    <location>
        <begin position="1"/>
        <end position="357"/>
    </location>
</feature>
<feature type="modified residue" description="N5-methylglutamine" evidence="1">
    <location>
        <position position="233"/>
    </location>
</feature>
<gene>
    <name evidence="1" type="primary">prfA</name>
    <name type="ordered locus">EF_2554</name>
</gene>
<evidence type="ECO:0000255" key="1">
    <source>
        <dbReference type="HAMAP-Rule" id="MF_00093"/>
    </source>
</evidence>